<sequence>MGIRVYKPTTNGRRNMTSLDFAEFTTSTPEKSLLVSLKSKAGRNNNGRITVRHQGGGHKRHYRLIDFKRNKDAVEAVVKTIEYDPNRSANIALVHYTDGVKAYIIAPKGLEVGQRIVSGPEADIKVGNALPLANIPVGTLVHNIELKPGRGGELVRAAGASAQVLGQEGKYTLVRLQSGEVRMILGTCRATVGVVGNEQHGLVNLGKAGRSRWKGIRPTVRGSVMNPNDHPHGGGEGKAPVGRKAPSTPWGKPALGLKTRNKKAKSDKLIVRRRNEK</sequence>
<gene>
    <name evidence="1" type="primary">rplB</name>
    <name type="ordered locus">SSA_0110</name>
</gene>
<dbReference type="EMBL" id="CP000387">
    <property type="protein sequence ID" value="ABN43571.1"/>
    <property type="molecule type" value="Genomic_DNA"/>
</dbReference>
<dbReference type="RefSeq" id="WP_011836335.1">
    <property type="nucleotide sequence ID" value="NC_009009.1"/>
</dbReference>
<dbReference type="RefSeq" id="YP_001034121.1">
    <property type="nucleotide sequence ID" value="NC_009009.1"/>
</dbReference>
<dbReference type="SMR" id="A3CK66"/>
<dbReference type="STRING" id="388919.SSA_0110"/>
<dbReference type="KEGG" id="ssa:SSA_0110"/>
<dbReference type="PATRIC" id="fig|388919.9.peg.103"/>
<dbReference type="eggNOG" id="COG0090">
    <property type="taxonomic scope" value="Bacteria"/>
</dbReference>
<dbReference type="HOGENOM" id="CLU_036235_2_1_9"/>
<dbReference type="OrthoDB" id="9778722at2"/>
<dbReference type="Proteomes" id="UP000002148">
    <property type="component" value="Chromosome"/>
</dbReference>
<dbReference type="GO" id="GO:0015934">
    <property type="term" value="C:large ribosomal subunit"/>
    <property type="evidence" value="ECO:0007669"/>
    <property type="project" value="InterPro"/>
</dbReference>
<dbReference type="GO" id="GO:0019843">
    <property type="term" value="F:rRNA binding"/>
    <property type="evidence" value="ECO:0007669"/>
    <property type="project" value="UniProtKB-UniRule"/>
</dbReference>
<dbReference type="GO" id="GO:0003735">
    <property type="term" value="F:structural constituent of ribosome"/>
    <property type="evidence" value="ECO:0007669"/>
    <property type="project" value="InterPro"/>
</dbReference>
<dbReference type="GO" id="GO:0016740">
    <property type="term" value="F:transferase activity"/>
    <property type="evidence" value="ECO:0007669"/>
    <property type="project" value="InterPro"/>
</dbReference>
<dbReference type="GO" id="GO:0002181">
    <property type="term" value="P:cytoplasmic translation"/>
    <property type="evidence" value="ECO:0007669"/>
    <property type="project" value="TreeGrafter"/>
</dbReference>
<dbReference type="FunFam" id="2.30.30.30:FF:000001">
    <property type="entry name" value="50S ribosomal protein L2"/>
    <property type="match status" value="1"/>
</dbReference>
<dbReference type="FunFam" id="2.40.50.140:FF:000003">
    <property type="entry name" value="50S ribosomal protein L2"/>
    <property type="match status" value="1"/>
</dbReference>
<dbReference type="FunFam" id="4.10.950.10:FF:000001">
    <property type="entry name" value="50S ribosomal protein L2"/>
    <property type="match status" value="1"/>
</dbReference>
<dbReference type="Gene3D" id="2.30.30.30">
    <property type="match status" value="1"/>
</dbReference>
<dbReference type="Gene3D" id="2.40.50.140">
    <property type="entry name" value="Nucleic acid-binding proteins"/>
    <property type="match status" value="1"/>
</dbReference>
<dbReference type="Gene3D" id="4.10.950.10">
    <property type="entry name" value="Ribosomal protein L2, domain 3"/>
    <property type="match status" value="1"/>
</dbReference>
<dbReference type="HAMAP" id="MF_01320_B">
    <property type="entry name" value="Ribosomal_uL2_B"/>
    <property type="match status" value="1"/>
</dbReference>
<dbReference type="InterPro" id="IPR012340">
    <property type="entry name" value="NA-bd_OB-fold"/>
</dbReference>
<dbReference type="InterPro" id="IPR014722">
    <property type="entry name" value="Rib_uL2_dom2"/>
</dbReference>
<dbReference type="InterPro" id="IPR002171">
    <property type="entry name" value="Ribosomal_uL2"/>
</dbReference>
<dbReference type="InterPro" id="IPR005880">
    <property type="entry name" value="Ribosomal_uL2_bac/org-type"/>
</dbReference>
<dbReference type="InterPro" id="IPR022669">
    <property type="entry name" value="Ribosomal_uL2_C"/>
</dbReference>
<dbReference type="InterPro" id="IPR022671">
    <property type="entry name" value="Ribosomal_uL2_CS"/>
</dbReference>
<dbReference type="InterPro" id="IPR014726">
    <property type="entry name" value="Ribosomal_uL2_dom3"/>
</dbReference>
<dbReference type="InterPro" id="IPR022666">
    <property type="entry name" value="Ribosomal_uL2_RNA-bd_dom"/>
</dbReference>
<dbReference type="InterPro" id="IPR008991">
    <property type="entry name" value="Translation_prot_SH3-like_sf"/>
</dbReference>
<dbReference type="NCBIfam" id="TIGR01171">
    <property type="entry name" value="rplB_bact"/>
    <property type="match status" value="1"/>
</dbReference>
<dbReference type="PANTHER" id="PTHR13691:SF5">
    <property type="entry name" value="LARGE RIBOSOMAL SUBUNIT PROTEIN UL2M"/>
    <property type="match status" value="1"/>
</dbReference>
<dbReference type="PANTHER" id="PTHR13691">
    <property type="entry name" value="RIBOSOMAL PROTEIN L2"/>
    <property type="match status" value="1"/>
</dbReference>
<dbReference type="Pfam" id="PF00181">
    <property type="entry name" value="Ribosomal_L2"/>
    <property type="match status" value="1"/>
</dbReference>
<dbReference type="Pfam" id="PF03947">
    <property type="entry name" value="Ribosomal_L2_C"/>
    <property type="match status" value="1"/>
</dbReference>
<dbReference type="PIRSF" id="PIRSF002158">
    <property type="entry name" value="Ribosomal_L2"/>
    <property type="match status" value="1"/>
</dbReference>
<dbReference type="SMART" id="SM01383">
    <property type="entry name" value="Ribosomal_L2"/>
    <property type="match status" value="1"/>
</dbReference>
<dbReference type="SMART" id="SM01382">
    <property type="entry name" value="Ribosomal_L2_C"/>
    <property type="match status" value="1"/>
</dbReference>
<dbReference type="SUPFAM" id="SSF50249">
    <property type="entry name" value="Nucleic acid-binding proteins"/>
    <property type="match status" value="1"/>
</dbReference>
<dbReference type="SUPFAM" id="SSF50104">
    <property type="entry name" value="Translation proteins SH3-like domain"/>
    <property type="match status" value="1"/>
</dbReference>
<dbReference type="PROSITE" id="PS00467">
    <property type="entry name" value="RIBOSOMAL_L2"/>
    <property type="match status" value="1"/>
</dbReference>
<feature type="chain" id="PRO_0000310026" description="Large ribosomal subunit protein uL2">
    <location>
        <begin position="1"/>
        <end position="277"/>
    </location>
</feature>
<feature type="region of interest" description="Disordered" evidence="2">
    <location>
        <begin position="219"/>
        <end position="277"/>
    </location>
</feature>
<feature type="compositionally biased region" description="Basic and acidic residues" evidence="2">
    <location>
        <begin position="264"/>
        <end position="277"/>
    </location>
</feature>
<name>RL2_STRSV</name>
<proteinExistence type="inferred from homology"/>
<keyword id="KW-1185">Reference proteome</keyword>
<keyword id="KW-0687">Ribonucleoprotein</keyword>
<keyword id="KW-0689">Ribosomal protein</keyword>
<keyword id="KW-0694">RNA-binding</keyword>
<keyword id="KW-0699">rRNA-binding</keyword>
<protein>
    <recommendedName>
        <fullName evidence="1">Large ribosomal subunit protein uL2</fullName>
    </recommendedName>
    <alternativeName>
        <fullName evidence="3">50S ribosomal protein L2</fullName>
    </alternativeName>
</protein>
<organism>
    <name type="scientific">Streptococcus sanguinis (strain SK36)</name>
    <dbReference type="NCBI Taxonomy" id="388919"/>
    <lineage>
        <taxon>Bacteria</taxon>
        <taxon>Bacillati</taxon>
        <taxon>Bacillota</taxon>
        <taxon>Bacilli</taxon>
        <taxon>Lactobacillales</taxon>
        <taxon>Streptococcaceae</taxon>
        <taxon>Streptococcus</taxon>
    </lineage>
</organism>
<comment type="function">
    <text evidence="1">One of the primary rRNA binding proteins. Required for association of the 30S and 50S subunits to form the 70S ribosome, for tRNA binding and peptide bond formation. It has been suggested to have peptidyltransferase activity; this is somewhat controversial. Makes several contacts with the 16S rRNA in the 70S ribosome.</text>
</comment>
<comment type="subunit">
    <text evidence="1">Part of the 50S ribosomal subunit. Forms a bridge to the 30S subunit in the 70S ribosome.</text>
</comment>
<comment type="similarity">
    <text evidence="1">Belongs to the universal ribosomal protein uL2 family.</text>
</comment>
<evidence type="ECO:0000255" key="1">
    <source>
        <dbReference type="HAMAP-Rule" id="MF_01320"/>
    </source>
</evidence>
<evidence type="ECO:0000256" key="2">
    <source>
        <dbReference type="SAM" id="MobiDB-lite"/>
    </source>
</evidence>
<evidence type="ECO:0000305" key="3"/>
<reference key="1">
    <citation type="journal article" date="2007" name="J. Bacteriol.">
        <title>Genome of the opportunistic pathogen Streptococcus sanguinis.</title>
        <authorList>
            <person name="Xu P."/>
            <person name="Alves J.M."/>
            <person name="Kitten T."/>
            <person name="Brown A."/>
            <person name="Chen Z."/>
            <person name="Ozaki L.S."/>
            <person name="Manque P."/>
            <person name="Ge X."/>
            <person name="Serrano M.G."/>
            <person name="Puiu D."/>
            <person name="Hendricks S."/>
            <person name="Wang Y."/>
            <person name="Chaplin M.D."/>
            <person name="Akan D."/>
            <person name="Paik S."/>
            <person name="Peterson D.L."/>
            <person name="Macrina F.L."/>
            <person name="Buck G.A."/>
        </authorList>
    </citation>
    <scope>NUCLEOTIDE SEQUENCE [LARGE SCALE GENOMIC DNA]</scope>
    <source>
        <strain>SK36</strain>
    </source>
</reference>
<accession>A3CK66</accession>